<feature type="chain" id="PRO_1000132980" description="Enolase">
    <location>
        <begin position="1"/>
        <end position="426"/>
    </location>
</feature>
<feature type="active site" description="Proton donor" evidence="1">
    <location>
        <position position="205"/>
    </location>
</feature>
<feature type="active site" description="Proton acceptor" evidence="1">
    <location>
        <position position="335"/>
    </location>
</feature>
<feature type="binding site" evidence="1">
    <location>
        <position position="163"/>
    </location>
    <ligand>
        <name>(2R)-2-phosphoglycerate</name>
        <dbReference type="ChEBI" id="CHEBI:58289"/>
    </ligand>
</feature>
<feature type="binding site" evidence="1">
    <location>
        <position position="242"/>
    </location>
    <ligand>
        <name>Mg(2+)</name>
        <dbReference type="ChEBI" id="CHEBI:18420"/>
    </ligand>
</feature>
<feature type="binding site" evidence="1">
    <location>
        <position position="283"/>
    </location>
    <ligand>
        <name>Mg(2+)</name>
        <dbReference type="ChEBI" id="CHEBI:18420"/>
    </ligand>
</feature>
<feature type="binding site" evidence="1">
    <location>
        <position position="310"/>
    </location>
    <ligand>
        <name>Mg(2+)</name>
        <dbReference type="ChEBI" id="CHEBI:18420"/>
    </ligand>
</feature>
<feature type="binding site" evidence="1">
    <location>
        <position position="335"/>
    </location>
    <ligand>
        <name>(2R)-2-phosphoglycerate</name>
        <dbReference type="ChEBI" id="CHEBI:58289"/>
    </ligand>
</feature>
<feature type="binding site" evidence="1">
    <location>
        <position position="364"/>
    </location>
    <ligand>
        <name>(2R)-2-phosphoglycerate</name>
        <dbReference type="ChEBI" id="CHEBI:58289"/>
    </ligand>
</feature>
<feature type="binding site" evidence="1">
    <location>
        <position position="365"/>
    </location>
    <ligand>
        <name>(2R)-2-phosphoglycerate</name>
        <dbReference type="ChEBI" id="CHEBI:58289"/>
    </ligand>
</feature>
<feature type="binding site" evidence="1">
    <location>
        <position position="386"/>
    </location>
    <ligand>
        <name>(2R)-2-phosphoglycerate</name>
        <dbReference type="ChEBI" id="CHEBI:58289"/>
    </ligand>
</feature>
<organism>
    <name type="scientific">Pseudarthrobacter chlorophenolicus (strain ATCC 700700 / DSM 12829 / CIP 107037 / JCM 12360 / KCTC 9906 / NCIMB 13794 / A6)</name>
    <name type="common">Arthrobacter chlorophenolicus</name>
    <dbReference type="NCBI Taxonomy" id="452863"/>
    <lineage>
        <taxon>Bacteria</taxon>
        <taxon>Bacillati</taxon>
        <taxon>Actinomycetota</taxon>
        <taxon>Actinomycetes</taxon>
        <taxon>Micrococcales</taxon>
        <taxon>Micrococcaceae</taxon>
        <taxon>Pseudarthrobacter</taxon>
    </lineage>
</organism>
<reference key="1">
    <citation type="submission" date="2009-01" db="EMBL/GenBank/DDBJ databases">
        <title>Complete sequence of chromosome of Arthrobacter chlorophenolicus A6.</title>
        <authorList>
            <consortium name="US DOE Joint Genome Institute"/>
            <person name="Lucas S."/>
            <person name="Copeland A."/>
            <person name="Lapidus A."/>
            <person name="Glavina del Rio T."/>
            <person name="Tice H."/>
            <person name="Bruce D."/>
            <person name="Goodwin L."/>
            <person name="Pitluck S."/>
            <person name="Goltsman E."/>
            <person name="Clum A."/>
            <person name="Larimer F."/>
            <person name="Land M."/>
            <person name="Hauser L."/>
            <person name="Kyrpides N."/>
            <person name="Mikhailova N."/>
            <person name="Jansson J."/>
            <person name="Richardson P."/>
        </authorList>
    </citation>
    <scope>NUCLEOTIDE SEQUENCE [LARGE SCALE GENOMIC DNA]</scope>
    <source>
        <strain>ATCC 700700 / DSM 12829 / CIP 107037 / JCM 12360 / KCTC 9906 / NCIMB 13794 / A6</strain>
    </source>
</reference>
<name>ENO_PSECP</name>
<comment type="function">
    <text evidence="1">Catalyzes the reversible conversion of 2-phosphoglycerate (2-PG) into phosphoenolpyruvate (PEP). It is essential for the degradation of carbohydrates via glycolysis.</text>
</comment>
<comment type="catalytic activity">
    <reaction evidence="1">
        <text>(2R)-2-phosphoglycerate = phosphoenolpyruvate + H2O</text>
        <dbReference type="Rhea" id="RHEA:10164"/>
        <dbReference type="ChEBI" id="CHEBI:15377"/>
        <dbReference type="ChEBI" id="CHEBI:58289"/>
        <dbReference type="ChEBI" id="CHEBI:58702"/>
        <dbReference type="EC" id="4.2.1.11"/>
    </reaction>
</comment>
<comment type="cofactor">
    <cofactor evidence="1">
        <name>Mg(2+)</name>
        <dbReference type="ChEBI" id="CHEBI:18420"/>
    </cofactor>
    <text evidence="1">Binds a second Mg(2+) ion via substrate during catalysis.</text>
</comment>
<comment type="pathway">
    <text evidence="1">Carbohydrate degradation; glycolysis; pyruvate from D-glyceraldehyde 3-phosphate: step 4/5.</text>
</comment>
<comment type="subcellular location">
    <subcellularLocation>
        <location evidence="1">Cytoplasm</location>
    </subcellularLocation>
    <subcellularLocation>
        <location evidence="1">Secreted</location>
    </subcellularLocation>
    <subcellularLocation>
        <location evidence="1">Cell surface</location>
    </subcellularLocation>
    <text evidence="1">Fractions of enolase are present in both the cytoplasm and on the cell surface.</text>
</comment>
<comment type="similarity">
    <text evidence="1">Belongs to the enolase family.</text>
</comment>
<gene>
    <name evidence="1" type="primary">eno</name>
    <name type="ordered locus">Achl_1220</name>
</gene>
<proteinExistence type="inferred from homology"/>
<sequence length="426" mass="45111">MALIDAIHAREILDSRGNPTVEVEVLLSDGQIGRAAVPSGASTGEHEAVELRDGDKGRYLGKGVQKAVDAVIDQIAPALTGFDATDQRSIDQAMLDLDGTPNKGKLGANAILGVSLAVANAAAASADLPLYKYLGGPNAHVLPVPLMNILNGGSHADSDVDIQEFMIAPIGAETFSEGLRWGVEVYHNLKSVLKEQGLSTGLGDEGGFAPNLPSNRAALDLIQEAIKNAGYTPGKDIALALDVASSEFFKDGAYQFEGKALSASEMSAYYAELVADYPLVSIEDPLDENDWEGWKTLTDAIGDKVQLVGDDLFVTNPAILQRGIDTRTANSLLVKVNQIGSLTETLDAVSLAQRAGYTTITSHRSGETEDTTIADISVATNAGQIKTGAPARSERVAKYNQLLRIEEELDDAARYAGRSAFPRFKG</sequence>
<dbReference type="EC" id="4.2.1.11" evidence="1"/>
<dbReference type="EMBL" id="CP001341">
    <property type="protein sequence ID" value="ACL39211.1"/>
    <property type="molecule type" value="Genomic_DNA"/>
</dbReference>
<dbReference type="RefSeq" id="WP_015936434.1">
    <property type="nucleotide sequence ID" value="NC_011886.1"/>
</dbReference>
<dbReference type="SMR" id="B8HEU5"/>
<dbReference type="STRING" id="452863.Achl_1220"/>
<dbReference type="KEGG" id="ach:Achl_1220"/>
<dbReference type="eggNOG" id="COG0148">
    <property type="taxonomic scope" value="Bacteria"/>
</dbReference>
<dbReference type="HOGENOM" id="CLU_031223_2_1_11"/>
<dbReference type="OrthoDB" id="9804716at2"/>
<dbReference type="UniPathway" id="UPA00109">
    <property type="reaction ID" value="UER00187"/>
</dbReference>
<dbReference type="Proteomes" id="UP000002505">
    <property type="component" value="Chromosome"/>
</dbReference>
<dbReference type="GO" id="GO:0009986">
    <property type="term" value="C:cell surface"/>
    <property type="evidence" value="ECO:0007669"/>
    <property type="project" value="UniProtKB-SubCell"/>
</dbReference>
<dbReference type="GO" id="GO:0005576">
    <property type="term" value="C:extracellular region"/>
    <property type="evidence" value="ECO:0007669"/>
    <property type="project" value="UniProtKB-SubCell"/>
</dbReference>
<dbReference type="GO" id="GO:0000015">
    <property type="term" value="C:phosphopyruvate hydratase complex"/>
    <property type="evidence" value="ECO:0007669"/>
    <property type="project" value="InterPro"/>
</dbReference>
<dbReference type="GO" id="GO:0000287">
    <property type="term" value="F:magnesium ion binding"/>
    <property type="evidence" value="ECO:0007669"/>
    <property type="project" value="UniProtKB-UniRule"/>
</dbReference>
<dbReference type="GO" id="GO:0004634">
    <property type="term" value="F:phosphopyruvate hydratase activity"/>
    <property type="evidence" value="ECO:0007669"/>
    <property type="project" value="UniProtKB-UniRule"/>
</dbReference>
<dbReference type="GO" id="GO:0006096">
    <property type="term" value="P:glycolytic process"/>
    <property type="evidence" value="ECO:0007669"/>
    <property type="project" value="UniProtKB-UniRule"/>
</dbReference>
<dbReference type="CDD" id="cd03313">
    <property type="entry name" value="enolase"/>
    <property type="match status" value="1"/>
</dbReference>
<dbReference type="FunFam" id="3.20.20.120:FF:000001">
    <property type="entry name" value="Enolase"/>
    <property type="match status" value="1"/>
</dbReference>
<dbReference type="FunFam" id="3.30.390.10:FF:000001">
    <property type="entry name" value="Enolase"/>
    <property type="match status" value="1"/>
</dbReference>
<dbReference type="Gene3D" id="3.20.20.120">
    <property type="entry name" value="Enolase-like C-terminal domain"/>
    <property type="match status" value="1"/>
</dbReference>
<dbReference type="Gene3D" id="3.30.390.10">
    <property type="entry name" value="Enolase-like, N-terminal domain"/>
    <property type="match status" value="1"/>
</dbReference>
<dbReference type="HAMAP" id="MF_00318">
    <property type="entry name" value="Enolase"/>
    <property type="match status" value="1"/>
</dbReference>
<dbReference type="InterPro" id="IPR000941">
    <property type="entry name" value="Enolase"/>
</dbReference>
<dbReference type="InterPro" id="IPR036849">
    <property type="entry name" value="Enolase-like_C_sf"/>
</dbReference>
<dbReference type="InterPro" id="IPR029017">
    <property type="entry name" value="Enolase-like_N"/>
</dbReference>
<dbReference type="InterPro" id="IPR020810">
    <property type="entry name" value="Enolase_C"/>
</dbReference>
<dbReference type="InterPro" id="IPR020809">
    <property type="entry name" value="Enolase_CS"/>
</dbReference>
<dbReference type="InterPro" id="IPR020811">
    <property type="entry name" value="Enolase_N"/>
</dbReference>
<dbReference type="NCBIfam" id="TIGR01060">
    <property type="entry name" value="eno"/>
    <property type="match status" value="1"/>
</dbReference>
<dbReference type="PANTHER" id="PTHR11902">
    <property type="entry name" value="ENOLASE"/>
    <property type="match status" value="1"/>
</dbReference>
<dbReference type="PANTHER" id="PTHR11902:SF1">
    <property type="entry name" value="ENOLASE"/>
    <property type="match status" value="1"/>
</dbReference>
<dbReference type="Pfam" id="PF00113">
    <property type="entry name" value="Enolase_C"/>
    <property type="match status" value="1"/>
</dbReference>
<dbReference type="Pfam" id="PF03952">
    <property type="entry name" value="Enolase_N"/>
    <property type="match status" value="1"/>
</dbReference>
<dbReference type="PIRSF" id="PIRSF001400">
    <property type="entry name" value="Enolase"/>
    <property type="match status" value="1"/>
</dbReference>
<dbReference type="PRINTS" id="PR00148">
    <property type="entry name" value="ENOLASE"/>
</dbReference>
<dbReference type="SFLD" id="SFLDS00001">
    <property type="entry name" value="Enolase"/>
    <property type="match status" value="1"/>
</dbReference>
<dbReference type="SFLD" id="SFLDF00002">
    <property type="entry name" value="enolase"/>
    <property type="match status" value="1"/>
</dbReference>
<dbReference type="SMART" id="SM01192">
    <property type="entry name" value="Enolase_C"/>
    <property type="match status" value="1"/>
</dbReference>
<dbReference type="SMART" id="SM01193">
    <property type="entry name" value="Enolase_N"/>
    <property type="match status" value="1"/>
</dbReference>
<dbReference type="SUPFAM" id="SSF51604">
    <property type="entry name" value="Enolase C-terminal domain-like"/>
    <property type="match status" value="1"/>
</dbReference>
<dbReference type="SUPFAM" id="SSF54826">
    <property type="entry name" value="Enolase N-terminal domain-like"/>
    <property type="match status" value="1"/>
</dbReference>
<dbReference type="PROSITE" id="PS00164">
    <property type="entry name" value="ENOLASE"/>
    <property type="match status" value="1"/>
</dbReference>
<evidence type="ECO:0000255" key="1">
    <source>
        <dbReference type="HAMAP-Rule" id="MF_00318"/>
    </source>
</evidence>
<accession>B8HEU5</accession>
<keyword id="KW-0963">Cytoplasm</keyword>
<keyword id="KW-0324">Glycolysis</keyword>
<keyword id="KW-0456">Lyase</keyword>
<keyword id="KW-0460">Magnesium</keyword>
<keyword id="KW-0479">Metal-binding</keyword>
<keyword id="KW-0964">Secreted</keyword>
<protein>
    <recommendedName>
        <fullName evidence="1">Enolase</fullName>
        <ecNumber evidence="1">4.2.1.11</ecNumber>
    </recommendedName>
    <alternativeName>
        <fullName evidence="1">2-phospho-D-glycerate hydro-lyase</fullName>
    </alternativeName>
    <alternativeName>
        <fullName evidence="1">2-phosphoglycerate dehydratase</fullName>
    </alternativeName>
</protein>